<name>SPEA_SHESR</name>
<gene>
    <name evidence="1" type="primary">speA</name>
    <name type="ordered locus">Shewmr7_1632</name>
</gene>
<accession>Q0HW78</accession>
<organism>
    <name type="scientific">Shewanella sp. (strain MR-7)</name>
    <dbReference type="NCBI Taxonomy" id="60481"/>
    <lineage>
        <taxon>Bacteria</taxon>
        <taxon>Pseudomonadati</taxon>
        <taxon>Pseudomonadota</taxon>
        <taxon>Gammaproteobacteria</taxon>
        <taxon>Alteromonadales</taxon>
        <taxon>Shewanellaceae</taxon>
        <taxon>Shewanella</taxon>
    </lineage>
</organism>
<reference key="1">
    <citation type="submission" date="2006-08" db="EMBL/GenBank/DDBJ databases">
        <title>Complete sequence of chromosome 1 of Shewanella sp. MR-7.</title>
        <authorList>
            <person name="Copeland A."/>
            <person name="Lucas S."/>
            <person name="Lapidus A."/>
            <person name="Barry K."/>
            <person name="Detter J.C."/>
            <person name="Glavina del Rio T."/>
            <person name="Hammon N."/>
            <person name="Israni S."/>
            <person name="Dalin E."/>
            <person name="Tice H."/>
            <person name="Pitluck S."/>
            <person name="Kiss H."/>
            <person name="Brettin T."/>
            <person name="Bruce D."/>
            <person name="Han C."/>
            <person name="Tapia R."/>
            <person name="Gilna P."/>
            <person name="Schmutz J."/>
            <person name="Larimer F."/>
            <person name="Land M."/>
            <person name="Hauser L."/>
            <person name="Kyrpides N."/>
            <person name="Mikhailova N."/>
            <person name="Nealson K."/>
            <person name="Konstantinidis K."/>
            <person name="Klappenbach J."/>
            <person name="Tiedje J."/>
            <person name="Richardson P."/>
        </authorList>
    </citation>
    <scope>NUCLEOTIDE SEQUENCE [LARGE SCALE GENOMIC DNA]</scope>
    <source>
        <strain>MR-7</strain>
    </source>
</reference>
<protein>
    <recommendedName>
        <fullName evidence="1">Biosynthetic arginine decarboxylase</fullName>
        <shortName evidence="1">ADC</shortName>
        <ecNumber evidence="1">4.1.1.19</ecNumber>
    </recommendedName>
</protein>
<evidence type="ECO:0000255" key="1">
    <source>
        <dbReference type="HAMAP-Rule" id="MF_01417"/>
    </source>
</evidence>
<feature type="chain" id="PRO_1000024273" description="Biosynthetic arginine decarboxylase">
    <location>
        <begin position="1"/>
        <end position="637"/>
    </location>
</feature>
<feature type="binding site" evidence="1">
    <location>
        <begin position="286"/>
        <end position="296"/>
    </location>
    <ligand>
        <name>substrate</name>
    </ligand>
</feature>
<feature type="modified residue" description="N6-(pyridoxal phosphate)lysine" evidence="1">
    <location>
        <position position="101"/>
    </location>
</feature>
<dbReference type="EC" id="4.1.1.19" evidence="1"/>
<dbReference type="EMBL" id="CP000444">
    <property type="protein sequence ID" value="ABI42627.1"/>
    <property type="molecule type" value="Genomic_DNA"/>
</dbReference>
<dbReference type="SMR" id="Q0HW78"/>
<dbReference type="KEGG" id="shm:Shewmr7_1632"/>
<dbReference type="HOGENOM" id="CLU_027243_1_0_6"/>
<dbReference type="UniPathway" id="UPA00186">
    <property type="reaction ID" value="UER00284"/>
</dbReference>
<dbReference type="GO" id="GO:0008792">
    <property type="term" value="F:arginine decarboxylase activity"/>
    <property type="evidence" value="ECO:0007669"/>
    <property type="project" value="UniProtKB-UniRule"/>
</dbReference>
<dbReference type="GO" id="GO:0046872">
    <property type="term" value="F:metal ion binding"/>
    <property type="evidence" value="ECO:0007669"/>
    <property type="project" value="UniProtKB-KW"/>
</dbReference>
<dbReference type="GO" id="GO:0006527">
    <property type="term" value="P:arginine catabolic process"/>
    <property type="evidence" value="ECO:0007669"/>
    <property type="project" value="InterPro"/>
</dbReference>
<dbReference type="GO" id="GO:0033388">
    <property type="term" value="P:putrescine biosynthetic process from arginine"/>
    <property type="evidence" value="ECO:0007669"/>
    <property type="project" value="TreeGrafter"/>
</dbReference>
<dbReference type="GO" id="GO:0008295">
    <property type="term" value="P:spermidine biosynthetic process"/>
    <property type="evidence" value="ECO:0007669"/>
    <property type="project" value="UniProtKB-UniRule"/>
</dbReference>
<dbReference type="CDD" id="cd06830">
    <property type="entry name" value="PLPDE_III_ADC"/>
    <property type="match status" value="1"/>
</dbReference>
<dbReference type="FunFam" id="1.10.287.3440:FF:000001">
    <property type="entry name" value="Biosynthetic arginine decarboxylase"/>
    <property type="match status" value="1"/>
</dbReference>
<dbReference type="FunFam" id="1.20.58.930:FF:000001">
    <property type="entry name" value="Biosynthetic arginine decarboxylase"/>
    <property type="match status" value="1"/>
</dbReference>
<dbReference type="FunFam" id="2.40.37.10:FF:000001">
    <property type="entry name" value="Biosynthetic arginine decarboxylase"/>
    <property type="match status" value="1"/>
</dbReference>
<dbReference type="FunFam" id="3.20.20.10:FF:000001">
    <property type="entry name" value="Biosynthetic arginine decarboxylase"/>
    <property type="match status" value="1"/>
</dbReference>
<dbReference type="Gene3D" id="1.10.287.3440">
    <property type="match status" value="1"/>
</dbReference>
<dbReference type="Gene3D" id="1.20.58.930">
    <property type="match status" value="1"/>
</dbReference>
<dbReference type="Gene3D" id="3.20.20.10">
    <property type="entry name" value="Alanine racemase"/>
    <property type="match status" value="1"/>
</dbReference>
<dbReference type="Gene3D" id="2.40.37.10">
    <property type="entry name" value="Lyase, Ornithine Decarboxylase, Chain A, domain 1"/>
    <property type="match status" value="1"/>
</dbReference>
<dbReference type="HAMAP" id="MF_01417">
    <property type="entry name" value="SpeA"/>
    <property type="match status" value="1"/>
</dbReference>
<dbReference type="InterPro" id="IPR009006">
    <property type="entry name" value="Ala_racemase/Decarboxylase_C"/>
</dbReference>
<dbReference type="InterPro" id="IPR040634">
    <property type="entry name" value="Arg_decarb_HB"/>
</dbReference>
<dbReference type="InterPro" id="IPR041128">
    <property type="entry name" value="Arg_decarbox_C"/>
</dbReference>
<dbReference type="InterPro" id="IPR002985">
    <property type="entry name" value="Arg_decrbxlase"/>
</dbReference>
<dbReference type="InterPro" id="IPR022644">
    <property type="entry name" value="De-COase2_N"/>
</dbReference>
<dbReference type="InterPro" id="IPR000183">
    <property type="entry name" value="Orn/DAP/Arg_de-COase"/>
</dbReference>
<dbReference type="InterPro" id="IPR029066">
    <property type="entry name" value="PLP-binding_barrel"/>
</dbReference>
<dbReference type="NCBIfam" id="NF003763">
    <property type="entry name" value="PRK05354.1"/>
    <property type="match status" value="1"/>
</dbReference>
<dbReference type="NCBIfam" id="TIGR01273">
    <property type="entry name" value="speA"/>
    <property type="match status" value="1"/>
</dbReference>
<dbReference type="PANTHER" id="PTHR43295">
    <property type="entry name" value="ARGININE DECARBOXYLASE"/>
    <property type="match status" value="1"/>
</dbReference>
<dbReference type="PANTHER" id="PTHR43295:SF9">
    <property type="entry name" value="BIOSYNTHETIC ARGININE DECARBOXYLASE"/>
    <property type="match status" value="1"/>
</dbReference>
<dbReference type="Pfam" id="PF17810">
    <property type="entry name" value="Arg_decarb_HB"/>
    <property type="match status" value="1"/>
</dbReference>
<dbReference type="Pfam" id="PF17944">
    <property type="entry name" value="Arg_decarbox_C"/>
    <property type="match status" value="1"/>
</dbReference>
<dbReference type="Pfam" id="PF02784">
    <property type="entry name" value="Orn_Arg_deC_N"/>
    <property type="match status" value="1"/>
</dbReference>
<dbReference type="PIRSF" id="PIRSF001336">
    <property type="entry name" value="Arg_decrbxlase"/>
    <property type="match status" value="1"/>
</dbReference>
<dbReference type="PRINTS" id="PR01180">
    <property type="entry name" value="ARGDCRBXLASE"/>
</dbReference>
<dbReference type="PRINTS" id="PR01179">
    <property type="entry name" value="ODADCRBXLASE"/>
</dbReference>
<dbReference type="SUPFAM" id="SSF51419">
    <property type="entry name" value="PLP-binding barrel"/>
    <property type="match status" value="1"/>
</dbReference>
<proteinExistence type="inferred from homology"/>
<comment type="function">
    <text evidence="1">Catalyzes the biosynthesis of agmatine from arginine.</text>
</comment>
<comment type="catalytic activity">
    <reaction evidence="1">
        <text>L-arginine + H(+) = agmatine + CO2</text>
        <dbReference type="Rhea" id="RHEA:17641"/>
        <dbReference type="ChEBI" id="CHEBI:15378"/>
        <dbReference type="ChEBI" id="CHEBI:16526"/>
        <dbReference type="ChEBI" id="CHEBI:32682"/>
        <dbReference type="ChEBI" id="CHEBI:58145"/>
        <dbReference type="EC" id="4.1.1.19"/>
    </reaction>
</comment>
<comment type="cofactor">
    <cofactor evidence="1">
        <name>Mg(2+)</name>
        <dbReference type="ChEBI" id="CHEBI:18420"/>
    </cofactor>
</comment>
<comment type="cofactor">
    <cofactor evidence="1">
        <name>pyridoxal 5'-phosphate</name>
        <dbReference type="ChEBI" id="CHEBI:597326"/>
    </cofactor>
</comment>
<comment type="pathway">
    <text evidence="1">Amine and polyamine biosynthesis; agmatine biosynthesis; agmatine from L-arginine: step 1/1.</text>
</comment>
<comment type="similarity">
    <text evidence="1">Belongs to the Orn/Lys/Arg decarboxylase class-II family. SpeA subfamily.</text>
</comment>
<keyword id="KW-0210">Decarboxylase</keyword>
<keyword id="KW-0456">Lyase</keyword>
<keyword id="KW-0460">Magnesium</keyword>
<keyword id="KW-0479">Metal-binding</keyword>
<keyword id="KW-0620">Polyamine biosynthesis</keyword>
<keyword id="KW-0663">Pyridoxal phosphate</keyword>
<keyword id="KW-0745">Spermidine biosynthesis</keyword>
<sequence>MNDWSIDAARAGYNVTHWSQGFYGISDQGEVTVSPDPKNPDHKIGLNELAKDMVKAGVALPVLVRFPQILHHRVNSLCQAFDQAIQKYEYQADYLLVYPIKVNQQKTVVEEILASQASKEVPQLGLEAGSKPELMAVLAMAQKASSVIVCNGYKDNEYIRLALIGEKLGHKVYIVLEKLSELKMVLAESKRLGVKPRLGLRARLAFQGKGKWQASGGEKSKFGLSAAQILTVVDQLKENDMLDSLQLLHFHLGSQIANIRDIRQGVSEAARFYCELRELGASINCFDVGGGLAVDYDGTRSQSNNSMNYGLSEYANNIVNVLTDICNEYEQPMPRIISESGRHLTAHHAVLITDVIGTEAYQVEDIQPPAEESPQLLHNMWQSWTELSGRADQRALIEIYHDSQSDLQEAQSLFALGQLSLAERAWAEQANLRVCHEVQGLLSTKNRYHRPIIDELNEKLADKFFVNFSLFQSLPDAWGIDQVFPVLPLSGLDKAPERRAVMLDITCDSDGIVDQYVDGQGIETTLPVPAWSAESPYLMGFFMVGAYQEILGDMHNLFGDTNSAVVSIEENGMTNIESVLAGDTVADVLRYVNLDAVDFMRTYEELVNQHIVEEERAQILEELQVGLKGYTYLEDFS</sequence>